<reference key="1">
    <citation type="journal article" date="2007" name="Environ. Microbiol.">
        <title>Whole-genome analysis of the ammonia-oxidizing bacterium, Nitrosomonas eutropha C91: implications for niche adaptation.</title>
        <authorList>
            <person name="Stein L.Y."/>
            <person name="Arp D.J."/>
            <person name="Berube P.M."/>
            <person name="Chain P.S."/>
            <person name="Hauser L."/>
            <person name="Jetten M.S."/>
            <person name="Klotz M.G."/>
            <person name="Larimer F.W."/>
            <person name="Norton J.M."/>
            <person name="Op den Camp H.J.M."/>
            <person name="Shin M."/>
            <person name="Wei X."/>
        </authorList>
    </citation>
    <scope>NUCLEOTIDE SEQUENCE [LARGE SCALE GENOMIC DNA]</scope>
    <source>
        <strain>DSM 101675 / C91 / Nm57</strain>
    </source>
</reference>
<comment type="function">
    <text evidence="1">Acts as a chaperone.</text>
</comment>
<comment type="induction">
    <text evidence="1">By stress conditions e.g. heat shock.</text>
</comment>
<comment type="similarity">
    <text evidence="1">Belongs to the heat shock protein 70 family.</text>
</comment>
<evidence type="ECO:0000255" key="1">
    <source>
        <dbReference type="HAMAP-Rule" id="MF_00332"/>
    </source>
</evidence>
<evidence type="ECO:0000256" key="2">
    <source>
        <dbReference type="SAM" id="MobiDB-lite"/>
    </source>
</evidence>
<gene>
    <name evidence="1" type="primary">dnaK</name>
    <name type="ordered locus">Neut_0412</name>
</gene>
<feature type="chain" id="PRO_1000059616" description="Chaperone protein DnaK">
    <location>
        <begin position="1"/>
        <end position="647"/>
    </location>
</feature>
<feature type="region of interest" description="Disordered" evidence="2">
    <location>
        <begin position="602"/>
        <end position="647"/>
    </location>
</feature>
<feature type="compositionally biased region" description="Low complexity" evidence="2">
    <location>
        <begin position="604"/>
        <end position="627"/>
    </location>
</feature>
<feature type="modified residue" description="Phosphothreonine; by autocatalysis" evidence="1">
    <location>
        <position position="199"/>
    </location>
</feature>
<name>DNAK_NITEC</name>
<keyword id="KW-0067">ATP-binding</keyword>
<keyword id="KW-0143">Chaperone</keyword>
<keyword id="KW-0547">Nucleotide-binding</keyword>
<keyword id="KW-0597">Phosphoprotein</keyword>
<keyword id="KW-0346">Stress response</keyword>
<dbReference type="EMBL" id="CP000450">
    <property type="protein sequence ID" value="ABI58690.1"/>
    <property type="molecule type" value="Genomic_DNA"/>
</dbReference>
<dbReference type="RefSeq" id="WP_011633532.1">
    <property type="nucleotide sequence ID" value="NC_008344.1"/>
</dbReference>
<dbReference type="SMR" id="Q0AIY1"/>
<dbReference type="STRING" id="335283.Neut_0412"/>
<dbReference type="KEGG" id="net:Neut_0412"/>
<dbReference type="eggNOG" id="COG0443">
    <property type="taxonomic scope" value="Bacteria"/>
</dbReference>
<dbReference type="HOGENOM" id="CLU_005965_2_1_4"/>
<dbReference type="OrthoDB" id="9766019at2"/>
<dbReference type="Proteomes" id="UP000001966">
    <property type="component" value="Chromosome"/>
</dbReference>
<dbReference type="GO" id="GO:0005524">
    <property type="term" value="F:ATP binding"/>
    <property type="evidence" value="ECO:0007669"/>
    <property type="project" value="UniProtKB-UniRule"/>
</dbReference>
<dbReference type="GO" id="GO:0140662">
    <property type="term" value="F:ATP-dependent protein folding chaperone"/>
    <property type="evidence" value="ECO:0007669"/>
    <property type="project" value="InterPro"/>
</dbReference>
<dbReference type="GO" id="GO:0051082">
    <property type="term" value="F:unfolded protein binding"/>
    <property type="evidence" value="ECO:0007669"/>
    <property type="project" value="InterPro"/>
</dbReference>
<dbReference type="CDD" id="cd10234">
    <property type="entry name" value="ASKHA_NBD_HSP70_DnaK-like"/>
    <property type="match status" value="1"/>
</dbReference>
<dbReference type="FunFam" id="2.60.34.10:FF:000014">
    <property type="entry name" value="Chaperone protein DnaK HSP70"/>
    <property type="match status" value="1"/>
</dbReference>
<dbReference type="FunFam" id="3.30.30.30:FF:000003">
    <property type="entry name" value="Heat shock protein 9"/>
    <property type="match status" value="1"/>
</dbReference>
<dbReference type="FunFam" id="1.20.1270.10:FF:000001">
    <property type="entry name" value="Molecular chaperone DnaK"/>
    <property type="match status" value="1"/>
</dbReference>
<dbReference type="FunFam" id="3.30.420.40:FF:000004">
    <property type="entry name" value="Molecular chaperone DnaK"/>
    <property type="match status" value="1"/>
</dbReference>
<dbReference type="FunFam" id="3.90.640.10:FF:000003">
    <property type="entry name" value="Molecular chaperone DnaK"/>
    <property type="match status" value="1"/>
</dbReference>
<dbReference type="Gene3D" id="1.20.1270.10">
    <property type="match status" value="1"/>
</dbReference>
<dbReference type="Gene3D" id="3.30.420.40">
    <property type="match status" value="2"/>
</dbReference>
<dbReference type="Gene3D" id="3.90.640.10">
    <property type="entry name" value="Actin, Chain A, domain 4"/>
    <property type="match status" value="1"/>
</dbReference>
<dbReference type="Gene3D" id="2.60.34.10">
    <property type="entry name" value="Substrate Binding Domain Of DNAk, Chain A, domain 1"/>
    <property type="match status" value="1"/>
</dbReference>
<dbReference type="HAMAP" id="MF_00332">
    <property type="entry name" value="DnaK"/>
    <property type="match status" value="1"/>
</dbReference>
<dbReference type="InterPro" id="IPR043129">
    <property type="entry name" value="ATPase_NBD"/>
</dbReference>
<dbReference type="InterPro" id="IPR012725">
    <property type="entry name" value="Chaperone_DnaK"/>
</dbReference>
<dbReference type="InterPro" id="IPR018181">
    <property type="entry name" value="Heat_shock_70_CS"/>
</dbReference>
<dbReference type="InterPro" id="IPR029048">
    <property type="entry name" value="HSP70_C_sf"/>
</dbReference>
<dbReference type="InterPro" id="IPR029047">
    <property type="entry name" value="HSP70_peptide-bd_sf"/>
</dbReference>
<dbReference type="InterPro" id="IPR013126">
    <property type="entry name" value="Hsp_70_fam"/>
</dbReference>
<dbReference type="NCBIfam" id="NF001413">
    <property type="entry name" value="PRK00290.1"/>
    <property type="match status" value="1"/>
</dbReference>
<dbReference type="NCBIfam" id="NF003520">
    <property type="entry name" value="PRK05183.1"/>
    <property type="match status" value="1"/>
</dbReference>
<dbReference type="NCBIfam" id="TIGR02350">
    <property type="entry name" value="prok_dnaK"/>
    <property type="match status" value="1"/>
</dbReference>
<dbReference type="PANTHER" id="PTHR19375">
    <property type="entry name" value="HEAT SHOCK PROTEIN 70KDA"/>
    <property type="match status" value="1"/>
</dbReference>
<dbReference type="Pfam" id="PF00012">
    <property type="entry name" value="HSP70"/>
    <property type="match status" value="1"/>
</dbReference>
<dbReference type="PRINTS" id="PR00301">
    <property type="entry name" value="HEATSHOCK70"/>
</dbReference>
<dbReference type="SUPFAM" id="SSF53067">
    <property type="entry name" value="Actin-like ATPase domain"/>
    <property type="match status" value="2"/>
</dbReference>
<dbReference type="SUPFAM" id="SSF100934">
    <property type="entry name" value="Heat shock protein 70kD (HSP70), C-terminal subdomain"/>
    <property type="match status" value="1"/>
</dbReference>
<dbReference type="SUPFAM" id="SSF100920">
    <property type="entry name" value="Heat shock protein 70kD (HSP70), peptide-binding domain"/>
    <property type="match status" value="1"/>
</dbReference>
<dbReference type="PROSITE" id="PS00297">
    <property type="entry name" value="HSP70_1"/>
    <property type="match status" value="1"/>
</dbReference>
<dbReference type="PROSITE" id="PS00329">
    <property type="entry name" value="HSP70_2"/>
    <property type="match status" value="1"/>
</dbReference>
<dbReference type="PROSITE" id="PS01036">
    <property type="entry name" value="HSP70_3"/>
    <property type="match status" value="1"/>
</dbReference>
<sequence>MAKIIGIDLGTTNSCVAVMENNKPKVIENAEGTRTTPSIVAYAEDNEVLVGASAKRQAVTNPENTLFAIKRLIGRKFDEEVVQKDISVTPYKIVRADNNDAWIEVRGRKIAPPEVSAQVLMKMKKTAEDYLGESVTEAVITVPAYFNDSQRQATKDAGRIAGLEVKRIINEPTAAALAFGMDKKEGDRKIAVYDLGGGTFDISIIEIAEIEGEHQFEVLATNGDTFLGGEDFDSSVISYLVEEFRKESGIDLKKDMLALQRLKDAAEKAKIELSSSQQTEVNLPYITADASGPKHLAVKITRAKLESLVEELIERTAGPCRTALKDAGLSVSDIDDVILVGGQTRMPKVQDKVKEIFGKEPRKDVNPDEAVAIGAAIQGGVLQGDVKDVLLLDVTPLSLGIETLGGVMTKLIQKNTTIPTKAQQIFSTAEDSQTAVTIHVLQGEREMASGNKSLGQFNLTDIPPAQRGMPQIEVTFDIDANGILHVSAKDKATGKENKIKIQASSGLSEDEIQKMVKDAETHAEEDKKALELVNSRNQCDAMIHSVKKSLTEYGDKLEADEKSKIEAALKDAEEALKSGDKEAIDAKTQVLTEASHKLAEKMYAQEQAQAGQQAGPGAGSASAGQSGEKPVEGEVVDAEFEEVKDKK</sequence>
<proteinExistence type="inferred from homology"/>
<accession>Q0AIY1</accession>
<protein>
    <recommendedName>
        <fullName evidence="1">Chaperone protein DnaK</fullName>
    </recommendedName>
    <alternativeName>
        <fullName evidence="1">HSP70</fullName>
    </alternativeName>
    <alternativeName>
        <fullName evidence="1">Heat shock 70 kDa protein</fullName>
    </alternativeName>
    <alternativeName>
        <fullName evidence="1">Heat shock protein 70</fullName>
    </alternativeName>
</protein>
<organism>
    <name type="scientific">Nitrosomonas eutropha (strain DSM 101675 / C91 / Nm57)</name>
    <dbReference type="NCBI Taxonomy" id="335283"/>
    <lineage>
        <taxon>Bacteria</taxon>
        <taxon>Pseudomonadati</taxon>
        <taxon>Pseudomonadota</taxon>
        <taxon>Betaproteobacteria</taxon>
        <taxon>Nitrosomonadales</taxon>
        <taxon>Nitrosomonadaceae</taxon>
        <taxon>Nitrosomonas</taxon>
    </lineage>
</organism>